<proteinExistence type="evidence at transcript level"/>
<organism>
    <name type="scientific">Mus terricolor</name>
    <name type="common">Earth-colored mouse</name>
    <name type="synonym">Mus dunni</name>
    <dbReference type="NCBI Taxonomy" id="254704"/>
    <lineage>
        <taxon>Eukaryota</taxon>
        <taxon>Metazoa</taxon>
        <taxon>Chordata</taxon>
        <taxon>Craniata</taxon>
        <taxon>Vertebrata</taxon>
        <taxon>Euteleostomi</taxon>
        <taxon>Mammalia</taxon>
        <taxon>Eutheria</taxon>
        <taxon>Euarchontoglires</taxon>
        <taxon>Glires</taxon>
        <taxon>Rodentia</taxon>
        <taxon>Myomorpha</taxon>
        <taxon>Muroidea</taxon>
        <taxon>Muridae</taxon>
        <taxon>Murinae</taxon>
        <taxon>Mus</taxon>
        <taxon>Mus</taxon>
    </lineage>
</organism>
<keyword id="KW-1003">Cell membrane</keyword>
<keyword id="KW-0265">Erythrocyte maturation</keyword>
<keyword id="KW-0325">Glycoprotein</keyword>
<keyword id="KW-0472">Membrane</keyword>
<keyword id="KW-0597">Phosphoprotein</keyword>
<keyword id="KW-0675">Receptor</keyword>
<keyword id="KW-0812">Transmembrane</keyword>
<keyword id="KW-1133">Transmembrane helix</keyword>
<keyword id="KW-0813">Transport</keyword>
<dbReference type="EMBL" id="AF239767">
    <property type="protein sequence ID" value="AAG21946.1"/>
    <property type="molecule type" value="mRNA"/>
</dbReference>
<dbReference type="SMR" id="Q9ES43"/>
<dbReference type="GlyCosmos" id="Q9ES43">
    <property type="glycosylation" value="1 site, No reported glycans"/>
</dbReference>
<dbReference type="GO" id="GO:0005739">
    <property type="term" value="C:mitochondrion"/>
    <property type="evidence" value="ECO:0007669"/>
    <property type="project" value="TreeGrafter"/>
</dbReference>
<dbReference type="GO" id="GO:0005886">
    <property type="term" value="C:plasma membrane"/>
    <property type="evidence" value="ECO:0000250"/>
    <property type="project" value="UniProtKB"/>
</dbReference>
<dbReference type="GO" id="GO:0015220">
    <property type="term" value="F:choline transmembrane transporter activity"/>
    <property type="evidence" value="ECO:0000250"/>
    <property type="project" value="UniProtKB"/>
</dbReference>
<dbReference type="GO" id="GO:0034228">
    <property type="term" value="F:ethanolamine transmembrane transporter activity"/>
    <property type="evidence" value="ECO:0000250"/>
    <property type="project" value="UniProtKB"/>
</dbReference>
<dbReference type="GO" id="GO:0020037">
    <property type="term" value="F:heme binding"/>
    <property type="evidence" value="ECO:0007669"/>
    <property type="project" value="TreeGrafter"/>
</dbReference>
<dbReference type="GO" id="GO:0015232">
    <property type="term" value="F:heme transmembrane transporter activity"/>
    <property type="evidence" value="ECO:0000250"/>
    <property type="project" value="UniProtKB"/>
</dbReference>
<dbReference type="GO" id="GO:0043249">
    <property type="term" value="P:erythrocyte maturation"/>
    <property type="evidence" value="ECO:0007669"/>
    <property type="project" value="UniProtKB-KW"/>
</dbReference>
<dbReference type="GO" id="GO:0097037">
    <property type="term" value="P:heme export"/>
    <property type="evidence" value="ECO:0000250"/>
    <property type="project" value="UniProtKB"/>
</dbReference>
<dbReference type="GO" id="GO:0006839">
    <property type="term" value="P:mitochondrial transport"/>
    <property type="evidence" value="ECO:0007669"/>
    <property type="project" value="TreeGrafter"/>
</dbReference>
<dbReference type="GO" id="GO:0008654">
    <property type="term" value="P:phospholipid biosynthetic process"/>
    <property type="evidence" value="ECO:0000250"/>
    <property type="project" value="UniProtKB"/>
</dbReference>
<dbReference type="FunFam" id="1.20.1250.20:FF:000184">
    <property type="entry name" value="Feline leukemia virus subgroup C receptor-related protein 1"/>
    <property type="match status" value="1"/>
</dbReference>
<dbReference type="Gene3D" id="1.20.1250.20">
    <property type="entry name" value="MFS general substrate transporter like domains"/>
    <property type="match status" value="1"/>
</dbReference>
<dbReference type="InterPro" id="IPR049680">
    <property type="entry name" value="FLVCR1-2_SLC49-like"/>
</dbReference>
<dbReference type="InterPro" id="IPR011701">
    <property type="entry name" value="MFS"/>
</dbReference>
<dbReference type="InterPro" id="IPR020846">
    <property type="entry name" value="MFS_dom"/>
</dbReference>
<dbReference type="InterPro" id="IPR036259">
    <property type="entry name" value="MFS_trans_sf"/>
</dbReference>
<dbReference type="PANTHER" id="PTHR10924:SF2">
    <property type="entry name" value="HEME TRANSPORTER FLVCR1"/>
    <property type="match status" value="1"/>
</dbReference>
<dbReference type="PANTHER" id="PTHR10924">
    <property type="entry name" value="MAJOR FACILITATOR SUPERFAMILY PROTEIN-RELATED"/>
    <property type="match status" value="1"/>
</dbReference>
<dbReference type="Pfam" id="PF07690">
    <property type="entry name" value="MFS_1"/>
    <property type="match status" value="1"/>
</dbReference>
<dbReference type="SUPFAM" id="SSF103473">
    <property type="entry name" value="MFS general substrate transporter"/>
    <property type="match status" value="1"/>
</dbReference>
<dbReference type="PROSITE" id="PS50850">
    <property type="entry name" value="MFS"/>
    <property type="match status" value="1"/>
</dbReference>
<feature type="chain" id="PRO_0000084845" description="Choline/ethanolamine transporter FLVCR1">
    <location>
        <begin position="1"/>
        <end position="560"/>
    </location>
</feature>
<feature type="topological domain" description="Cytoplasmic" evidence="1">
    <location>
        <begin position="1"/>
        <end position="92"/>
    </location>
</feature>
<feature type="transmembrane region" description="Helical; Name=TM1" evidence="1">
    <location>
        <begin position="93"/>
        <end position="117"/>
    </location>
</feature>
<feature type="topological domain" description="Extracellular" evidence="1">
    <location>
        <begin position="118"/>
        <end position="135"/>
    </location>
</feature>
<feature type="transmembrane region" description="Helical; Name=TM2" evidence="1">
    <location>
        <begin position="136"/>
        <end position="163"/>
    </location>
</feature>
<feature type="topological domain" description="Cytoplasmic" evidence="1">
    <location>
        <begin position="164"/>
        <end position="165"/>
    </location>
</feature>
<feature type="transmembrane region" description="Helical; Name=TM3" evidence="1">
    <location>
        <begin position="166"/>
        <end position="185"/>
    </location>
</feature>
<feature type="topological domain" description="Extracellular" evidence="1">
    <location>
        <begin position="186"/>
        <end position="192"/>
    </location>
</feature>
<feature type="transmembrane region" description="Helical; Name=TM4" evidence="1">
    <location>
        <begin position="193"/>
        <end position="221"/>
    </location>
</feature>
<feature type="topological domain" description="Cytoplasmic" evidence="1">
    <location>
        <begin position="222"/>
        <end position="226"/>
    </location>
</feature>
<feature type="transmembrane region" description="Helical; Name=TM5" evidence="1">
    <location>
        <begin position="227"/>
        <end position="252"/>
    </location>
</feature>
<feature type="topological domain" description="Extracellular" evidence="1">
    <location>
        <begin position="253"/>
        <end position="270"/>
    </location>
</feature>
<feature type="transmembrane region" description="Helical; Name=TM6" evidence="1">
    <location>
        <begin position="271"/>
        <end position="300"/>
    </location>
</feature>
<feature type="topological domain" description="Cytoplasmic" evidence="1">
    <location>
        <begin position="301"/>
        <end position="336"/>
    </location>
</feature>
<feature type="transmembrane region" description="Helical; Name=TM7" evidence="1">
    <location>
        <begin position="337"/>
        <end position="367"/>
    </location>
</feature>
<feature type="topological domain" description="Extracellular" evidence="1">
    <location>
        <begin position="368"/>
        <end position="371"/>
    </location>
</feature>
<feature type="transmembrane region" description="Helical; Name=TM8" evidence="1">
    <location>
        <begin position="372"/>
        <end position="400"/>
    </location>
</feature>
<feature type="topological domain" description="Cytoplasmic" evidence="1">
    <location>
        <begin position="401"/>
        <end position="402"/>
    </location>
</feature>
<feature type="transmembrane region" description="Helical; Name=TM9" evidence="1">
    <location>
        <begin position="403"/>
        <end position="425"/>
    </location>
</feature>
<feature type="topological domain" description="Extracellular" evidence="1">
    <location>
        <begin position="426"/>
        <end position="428"/>
    </location>
</feature>
<feature type="transmembrane region" description="Helical; Name=TM10" evidence="1">
    <location>
        <begin position="429"/>
        <end position="458"/>
    </location>
</feature>
<feature type="topological domain" description="Cytoplasmic" evidence="1">
    <location>
        <begin position="459"/>
        <end position="466"/>
    </location>
</feature>
<feature type="transmembrane region" description="Helical; Name=TM11" evidence="1">
    <location>
        <begin position="467"/>
        <end position="492"/>
    </location>
</feature>
<feature type="topological domain" description="Extracellular" evidence="1">
    <location>
        <begin position="493"/>
        <end position="495"/>
    </location>
</feature>
<feature type="transmembrane region" description="Helical; Name=TM12" evidence="1">
    <location>
        <begin position="496"/>
        <end position="518"/>
    </location>
</feature>
<feature type="topological domain" description="Cytoplasmic" evidence="1">
    <location>
        <begin position="519"/>
        <end position="560"/>
    </location>
</feature>
<feature type="region of interest" description="Disordered" evidence="3">
    <location>
        <begin position="1"/>
        <end position="43"/>
    </location>
</feature>
<feature type="binding site" evidence="1">
    <location>
        <position position="207"/>
    </location>
    <ligand>
        <name>ethanolamine</name>
        <dbReference type="ChEBI" id="CHEBI:57603"/>
    </ligand>
</feature>
<feature type="binding site" evidence="1">
    <location>
        <position position="476"/>
    </location>
    <ligand>
        <name>choline</name>
        <dbReference type="ChEBI" id="CHEBI:15354"/>
    </ligand>
</feature>
<feature type="binding site" evidence="1">
    <location>
        <position position="476"/>
    </location>
    <ligand>
        <name>ethanolamine</name>
        <dbReference type="ChEBI" id="CHEBI:57603"/>
    </ligand>
</feature>
<feature type="modified residue" description="Phosphoserine" evidence="1">
    <location>
        <position position="542"/>
    </location>
</feature>
<feature type="glycosylation site" description="N-linked (GlcNAc...) asparagine" evidence="2">
    <location>
        <position position="270"/>
    </location>
</feature>
<gene>
    <name type="primary">Flvcr1</name>
</gene>
<name>FLVC1_MUSTR</name>
<protein>
    <recommendedName>
        <fullName>Choline/ethanolamine transporter FLVCR1</fullName>
    </recommendedName>
    <alternativeName>
        <fullName>Feline leukemia virus subgroup C receptor-related protein 1</fullName>
    </alternativeName>
    <alternativeName>
        <fullName evidence="1">Heme transporter FLVCR1</fullName>
    </alternativeName>
</protein>
<reference key="1">
    <citation type="journal article" date="2000" name="J. Virol.">
        <title>Cellular and species resistance to murine amphotropic, gibbon ape, and feline subgroup C leukemia viruses is strongly influenced by receptor expression levels and by receptor masking mechanisms.</title>
        <authorList>
            <person name="Tailor C.S."/>
            <person name="Nouri A."/>
            <person name="Kabat D."/>
        </authorList>
    </citation>
    <scope>NUCLEOTIDE SEQUENCE [MRNA]</scope>
</reference>
<accession>Q9ES43</accession>
<comment type="function">
    <text evidence="1">Uniporter that mediates the transport of extracellular choline and ethanolamine into cells, thereby playing a key role in phospholipid biosynthesis. Choline and ethanolamine are the precursors of phosphatidylcholine and phosphatidylethanolamine, respectively, the two most abundant phospholipids. Transport is not coupled with proton transport and is exclusively driven by the choline (or ethanolamine) gradient across the plasma membrane. Also acts as a heme b transporter that mediates heme efflux from the cytoplasm to the extracellular compartment.</text>
</comment>
<comment type="catalytic activity">
    <reaction evidence="1">
        <text>choline(out) = choline(in)</text>
        <dbReference type="Rhea" id="RHEA:32751"/>
        <dbReference type="ChEBI" id="CHEBI:15354"/>
    </reaction>
</comment>
<comment type="catalytic activity">
    <reaction evidence="1">
        <text>ethanolamine(in) = ethanolamine(out)</text>
        <dbReference type="Rhea" id="RHEA:32747"/>
        <dbReference type="ChEBI" id="CHEBI:57603"/>
    </reaction>
</comment>
<comment type="catalytic activity">
    <reaction evidence="1">
        <text>heme b(in) = heme b(out)</text>
        <dbReference type="Rhea" id="RHEA:75443"/>
        <dbReference type="ChEBI" id="CHEBI:60344"/>
    </reaction>
</comment>
<comment type="subcellular location">
    <subcellularLocation>
        <location evidence="1">Cell membrane</location>
        <topology evidence="2">Multi-pass membrane protein</topology>
    </subcellularLocation>
</comment>
<comment type="similarity">
    <text evidence="4">Belongs to the major facilitator superfamily. Feline leukemia virus subgroup C receptor (TC 2.A.1.28.1) family.</text>
</comment>
<sequence>MARPDDEVGPAVAPGHPLGKGYLPVPKGAPDGEARLVPQNGPEALNGGPVLDPLVAGAQDGPQALIAAEEETQARLLPAGDGEDVPCPACPPRTALSPRRFVVLLIFSLYSLVNAFQWIQYSSISNVFEDFYEVSPLHINWLSMVYMVAYVPLIFPATWLLDTRGLRLTALLGSGLNCLGAWVKCGSVQRHLFWVTMLGQILCSVAQVFILGLPSPVASVWFGPKEVSTACATAVLGNQLGTAVGFLLPPVLVPALGTQNNTGLLAHTQNNTDLLAHNINTMFYGTAFISTFLFFLTVIAFKEKPPLPPSQAQAILRDSPPEEYSYKSSIWNLCRNIPFVLLLVSYGIMTGAFYSISTLLNQIILTYYVGEEVNAGRIGLTLVVAGMVGSILCGLWLDYTKTYKQTTLIVYVLSFIGMLIFTFTLNLGYIVALFFTGGILGFFMTGYLPLGFEFAVEITYPESEGMSSGLLNTAAQILGIFFTLAQGKITTDYNSPEAGNIFLCAWMFVGIILTALIKSDLRRHNINTGLTNIDVKAVPVDSRVDPKPKAMVSIQSESSL</sequence>
<evidence type="ECO:0000250" key="1">
    <source>
        <dbReference type="UniProtKB" id="Q9Y5Y0"/>
    </source>
</evidence>
<evidence type="ECO:0000255" key="2"/>
<evidence type="ECO:0000256" key="3">
    <source>
        <dbReference type="SAM" id="MobiDB-lite"/>
    </source>
</evidence>
<evidence type="ECO:0000305" key="4"/>